<dbReference type="EMBL" id="M15160">
    <property type="protein sequence ID" value="AAA74727.1"/>
    <property type="molecule type" value="Genomic_DNA"/>
</dbReference>
<dbReference type="EMBL" id="U51032">
    <property type="protein sequence ID" value="AAB64783.1"/>
    <property type="molecule type" value="Genomic_DNA"/>
</dbReference>
<dbReference type="EMBL" id="AY557787">
    <property type="protein sequence ID" value="AAS56113.1"/>
    <property type="molecule type" value="Genomic_DNA"/>
</dbReference>
<dbReference type="EMBL" id="BK006938">
    <property type="protein sequence ID" value="DAA12187.1"/>
    <property type="molecule type" value="Genomic_DNA"/>
</dbReference>
<dbReference type="PIR" id="S70112">
    <property type="entry name" value="R6BYM1"/>
</dbReference>
<dbReference type="RefSeq" id="NP_010634.3">
    <property type="nucleotide sequence ID" value="NM_001180655.3"/>
</dbReference>
<dbReference type="PDB" id="5MRC">
    <property type="method" value="EM"/>
    <property type="resolution" value="3.25 A"/>
    <property type="chains" value="44=1-321"/>
</dbReference>
<dbReference type="PDB" id="5MRE">
    <property type="method" value="EM"/>
    <property type="resolution" value="3.75 A"/>
    <property type="chains" value="44=1-321"/>
</dbReference>
<dbReference type="PDB" id="5MRF">
    <property type="method" value="EM"/>
    <property type="resolution" value="4.97 A"/>
    <property type="chains" value="44=1-321"/>
</dbReference>
<dbReference type="PDB" id="8D8K">
    <property type="method" value="EM"/>
    <property type="resolution" value="3.13 A"/>
    <property type="chains" value="4=1-321"/>
</dbReference>
<dbReference type="PDB" id="8D8L">
    <property type="method" value="EM"/>
    <property type="resolution" value="2.60 A"/>
    <property type="chains" value="4=1-321"/>
</dbReference>
<dbReference type="PDB" id="8OM2">
    <property type="method" value="EM"/>
    <property type="resolution" value="2.57 A"/>
    <property type="chains" value="4=1-321"/>
</dbReference>
<dbReference type="PDB" id="8OM3">
    <property type="method" value="EM"/>
    <property type="resolution" value="2.87 A"/>
    <property type="chains" value="4=1-321"/>
</dbReference>
<dbReference type="PDB" id="8OM4">
    <property type="method" value="EM"/>
    <property type="resolution" value="2.32 A"/>
    <property type="chains" value="4=1-321"/>
</dbReference>
<dbReference type="PDBsum" id="5MRC"/>
<dbReference type="PDBsum" id="5MRE"/>
<dbReference type="PDBsum" id="5MRF"/>
<dbReference type="PDBsum" id="8D8K"/>
<dbReference type="PDBsum" id="8D8L"/>
<dbReference type="PDBsum" id="8OM2"/>
<dbReference type="PDBsum" id="8OM3"/>
<dbReference type="PDBsum" id="8OM4"/>
<dbReference type="EMDB" id="EMD-16966"/>
<dbReference type="EMDB" id="EMD-16967"/>
<dbReference type="EMDB" id="EMD-16968"/>
<dbReference type="EMDB" id="EMD-27250"/>
<dbReference type="EMDB" id="EMD-27251"/>
<dbReference type="EMDB" id="EMD-3551"/>
<dbReference type="EMDB" id="EMD-3552"/>
<dbReference type="EMDB" id="EMD-3553"/>
<dbReference type="SMR" id="P10662"/>
<dbReference type="BioGRID" id="32403">
    <property type="interactions" value="164"/>
</dbReference>
<dbReference type="ComplexPortal" id="CPX-1603">
    <property type="entry name" value="37S mitochondrial small ribosomal subunit"/>
</dbReference>
<dbReference type="DIP" id="DIP-6740N"/>
<dbReference type="FunCoup" id="P10662">
    <property type="interactions" value="301"/>
</dbReference>
<dbReference type="IntAct" id="P10662">
    <property type="interactions" value="61"/>
</dbReference>
<dbReference type="MINT" id="P10662"/>
<dbReference type="STRING" id="4932.YDR347W"/>
<dbReference type="iPTMnet" id="P10662"/>
<dbReference type="PaxDb" id="4932-YDR347W"/>
<dbReference type="PeptideAtlas" id="P10662"/>
<dbReference type="EnsemblFungi" id="YDR347W_mRNA">
    <property type="protein sequence ID" value="YDR347W"/>
    <property type="gene ID" value="YDR347W"/>
</dbReference>
<dbReference type="GeneID" id="851948"/>
<dbReference type="KEGG" id="sce:YDR347W"/>
<dbReference type="AGR" id="SGD:S000002755"/>
<dbReference type="SGD" id="S000002755">
    <property type="gene designation" value="MRP1"/>
</dbReference>
<dbReference type="VEuPathDB" id="FungiDB:YDR347W"/>
<dbReference type="eggNOG" id="KOG0876">
    <property type="taxonomic scope" value="Eukaryota"/>
</dbReference>
<dbReference type="HOGENOM" id="CLU_057349_0_0_1"/>
<dbReference type="InParanoid" id="P10662"/>
<dbReference type="OMA" id="VFGKQQY"/>
<dbReference type="OrthoDB" id="275227at2759"/>
<dbReference type="BioCyc" id="YEAST:G3O-29901-MONOMER"/>
<dbReference type="BioGRID-ORCS" id="851948">
    <property type="hits" value="6 hits in 10 CRISPR screens"/>
</dbReference>
<dbReference type="PRO" id="PR:P10662"/>
<dbReference type="Proteomes" id="UP000002311">
    <property type="component" value="Chromosome IV"/>
</dbReference>
<dbReference type="RNAct" id="P10662">
    <property type="molecule type" value="protein"/>
</dbReference>
<dbReference type="GO" id="GO:0005737">
    <property type="term" value="C:cytoplasm"/>
    <property type="evidence" value="ECO:0000318"/>
    <property type="project" value="GO_Central"/>
</dbReference>
<dbReference type="GO" id="GO:0005743">
    <property type="term" value="C:mitochondrial inner membrane"/>
    <property type="evidence" value="ECO:0000303"/>
    <property type="project" value="ComplexPortal"/>
</dbReference>
<dbReference type="GO" id="GO:0005763">
    <property type="term" value="C:mitochondrial small ribosomal subunit"/>
    <property type="evidence" value="ECO:0000314"/>
    <property type="project" value="SGD"/>
</dbReference>
<dbReference type="GO" id="GO:0005739">
    <property type="term" value="C:mitochondrion"/>
    <property type="evidence" value="ECO:0007005"/>
    <property type="project" value="SGD"/>
</dbReference>
<dbReference type="GO" id="GO:0003735">
    <property type="term" value="F:structural constituent of ribosome"/>
    <property type="evidence" value="ECO:0000314"/>
    <property type="project" value="SGD"/>
</dbReference>
<dbReference type="GO" id="GO:0032543">
    <property type="term" value="P:mitochondrial translation"/>
    <property type="evidence" value="ECO:0000303"/>
    <property type="project" value="ComplexPortal"/>
</dbReference>
<dbReference type="Gene3D" id="3.55.40.20">
    <property type="entry name" value="Iron/manganese superoxide dismutase, C-terminal domain"/>
    <property type="match status" value="1"/>
</dbReference>
<dbReference type="InterPro" id="IPR036314">
    <property type="entry name" value="SOD_C_sf"/>
</dbReference>
<dbReference type="PANTHER" id="PTHR43595">
    <property type="entry name" value="37S RIBOSOMAL PROTEIN S26, MITOCHONDRIAL"/>
    <property type="match status" value="1"/>
</dbReference>
<dbReference type="PANTHER" id="PTHR43595:SF1">
    <property type="entry name" value="SMALL RIBOSOMAL SUBUNIT PROTEIN MS43"/>
    <property type="match status" value="1"/>
</dbReference>
<dbReference type="SUPFAM" id="SSF54719">
    <property type="entry name" value="Fe,Mn superoxide dismutase (SOD), C-terminal domain"/>
    <property type="match status" value="1"/>
</dbReference>
<protein>
    <recommendedName>
        <fullName evidence="10">Small ribosomal subunit protein mS43</fullName>
    </recommendedName>
    <alternativeName>
        <fullName>37S ribosomal protein MRP1, mitochondrial</fullName>
    </alternativeName>
</protein>
<organism>
    <name type="scientific">Saccharomyces cerevisiae (strain ATCC 204508 / S288c)</name>
    <name type="common">Baker's yeast</name>
    <dbReference type="NCBI Taxonomy" id="559292"/>
    <lineage>
        <taxon>Eukaryota</taxon>
        <taxon>Fungi</taxon>
        <taxon>Dikarya</taxon>
        <taxon>Ascomycota</taxon>
        <taxon>Saccharomycotina</taxon>
        <taxon>Saccharomycetes</taxon>
        <taxon>Saccharomycetales</taxon>
        <taxon>Saccharomycetaceae</taxon>
        <taxon>Saccharomyces</taxon>
    </lineage>
</organism>
<evidence type="ECO:0000255" key="1"/>
<evidence type="ECO:0000269" key="2">
    <source>
    </source>
</evidence>
<evidence type="ECO:0000269" key="3">
    <source>
    </source>
</evidence>
<evidence type="ECO:0000269" key="4">
    <source>
    </source>
</evidence>
<evidence type="ECO:0000269" key="5">
    <source>
    </source>
</evidence>
<evidence type="ECO:0000269" key="6">
    <source>
    </source>
</evidence>
<evidence type="ECO:0000269" key="7">
    <source>
    </source>
</evidence>
<evidence type="ECO:0000269" key="8">
    <source>
    </source>
</evidence>
<evidence type="ECO:0000269" key="9">
    <source>
    </source>
</evidence>
<evidence type="ECO:0000303" key="10">
    <source>
    </source>
</evidence>
<evidence type="ECO:0000305" key="11"/>
<evidence type="ECO:0000305" key="12">
    <source>
    </source>
</evidence>
<evidence type="ECO:0000305" key="13">
    <source>
    </source>
</evidence>
<evidence type="ECO:0007829" key="14">
    <source>
        <dbReference type="PDB" id="8D8K"/>
    </source>
</evidence>
<evidence type="ECO:0007829" key="15">
    <source>
        <dbReference type="PDB" id="8D8L"/>
    </source>
</evidence>
<proteinExistence type="evidence at protein level"/>
<comment type="function">
    <text evidence="12 13">Component of the mitochondrial ribosome (mitoribosome), a dedicated translation machinery responsible for the synthesis of mitochondrial genome-encoded proteins, including at least some of the essential transmembrane subunits of the mitochondrial respiratory chain. The mitoribosomes are attached to the mitochondrial inner membrane and translation products are cotranslationally integrated into the membrane.</text>
</comment>
<comment type="subunit">
    <text evidence="2 3 7 9">Component of the mitochondrial small ribosomal subunit (mt-SSU). Mature yeast 74S mitochondrial ribosomes consist of a small (37S) and a large (54S) subunit. The 37S small subunit contains a 15S ribosomal RNA (15S mt-rRNA) and 34 different proteins. The 54S large subunit contains a 21S rRNA (21S mt-rRNA) and 46 different proteins. mS43 forms a heterodimer with mS42, building a large protuberance adjacent to the mRNA channel exit in the mt-SSU body.</text>
</comment>
<comment type="subcellular location">
    <subcellularLocation>
        <location evidence="4 6 7">Mitochondrion</location>
    </subcellularLocation>
    <text evidence="8">Mitoribosomes are tethered to the mitochondrial inner membrane and spatially aligned with the membrane insertion machinery through two distinct membrane contact sites, formed by the 21S rRNA expansion segment 96-ES1 and the inner membrane protein MBA1.</text>
</comment>
<comment type="miscellaneous">
    <text evidence="5">Present with 2840 molecules/cell in log phase SD medium.</text>
</comment>
<comment type="similarity">
    <text evidence="11">Belongs to the mitochondrion-specific ribosomal protein mS43 family.</text>
</comment>
<accession>P10662</accession>
<accession>D6VSX7</accession>
<feature type="transit peptide" description="Mitochondrion" evidence="1">
    <location>
        <begin position="1"/>
        <end position="13"/>
    </location>
</feature>
<feature type="chain" id="PRO_0000087698" description="Small ribosomal subunit protein mS43">
    <location>
        <begin position="14"/>
        <end position="321"/>
    </location>
</feature>
<feature type="sequence conflict" description="In Ref. 1; AAA74727." evidence="11" ref="1">
    <original>P</original>
    <variation>S</variation>
    <location>
        <position position="113"/>
    </location>
</feature>
<feature type="sequence conflict" description="In Ref. 1; AAA74727." evidence="11" ref="1">
    <original>N</original>
    <variation>H</variation>
    <location>
        <position position="319"/>
    </location>
</feature>
<feature type="turn" evidence="14">
    <location>
        <begin position="29"/>
        <end position="31"/>
    </location>
</feature>
<feature type="helix" evidence="15">
    <location>
        <begin position="34"/>
        <end position="40"/>
    </location>
</feature>
<feature type="helix" evidence="15">
    <location>
        <begin position="42"/>
        <end position="55"/>
    </location>
</feature>
<feature type="helix" evidence="15">
    <location>
        <begin position="58"/>
        <end position="61"/>
    </location>
</feature>
<feature type="helix" evidence="15">
    <location>
        <begin position="64"/>
        <end position="70"/>
    </location>
</feature>
<feature type="turn" evidence="15">
    <location>
        <begin position="71"/>
        <end position="73"/>
    </location>
</feature>
<feature type="helix" evidence="15">
    <location>
        <begin position="78"/>
        <end position="95"/>
    </location>
</feature>
<feature type="turn" evidence="15">
    <location>
        <begin position="105"/>
        <end position="107"/>
    </location>
</feature>
<feature type="helix" evidence="15">
    <location>
        <begin position="113"/>
        <end position="117"/>
    </location>
</feature>
<feature type="turn" evidence="15">
    <location>
        <begin position="122"/>
        <end position="124"/>
    </location>
</feature>
<feature type="helix" evidence="15">
    <location>
        <begin position="131"/>
        <end position="133"/>
    </location>
</feature>
<feature type="helix" evidence="15">
    <location>
        <begin position="136"/>
        <end position="146"/>
    </location>
</feature>
<feature type="helix" evidence="15">
    <location>
        <begin position="149"/>
        <end position="161"/>
    </location>
</feature>
<feature type="strand" evidence="15">
    <location>
        <begin position="165"/>
        <end position="175"/>
    </location>
</feature>
<feature type="strand" evidence="15">
    <location>
        <begin position="196"/>
        <end position="204"/>
    </location>
</feature>
<feature type="strand" evidence="14">
    <location>
        <begin position="207"/>
        <end position="209"/>
    </location>
</feature>
<feature type="turn" evidence="15">
    <location>
        <begin position="210"/>
        <end position="214"/>
    </location>
</feature>
<feature type="helix" evidence="15">
    <location>
        <begin position="215"/>
        <end position="229"/>
    </location>
</feature>
<feature type="helix" evidence="15">
    <location>
        <begin position="245"/>
        <end position="257"/>
    </location>
</feature>
<feature type="strand" evidence="15">
    <location>
        <begin position="266"/>
        <end position="274"/>
    </location>
</feature>
<feature type="helix" evidence="15">
    <location>
        <begin position="277"/>
        <end position="284"/>
    </location>
</feature>
<feature type="helix" evidence="15">
    <location>
        <begin position="289"/>
        <end position="299"/>
    </location>
</feature>
<feature type="helix" evidence="15">
    <location>
        <begin position="302"/>
        <end position="307"/>
    </location>
</feature>
<sequence>MLRFTGARAIRKYSTRYALEHLKEGAPLKGLFSIEGLQKAWFDRVKYLDAKLNDCTNEAQQKPLETLIHENSKSASKKHIVNYASSLYNLKFSMSSLQGCIRTPPEECPRLGPEALLQTPDFNRTISNEPLTTGNERLQAALISSFGSLMEFRTLLINSNLAISGDGFTWLVARRQLDKRAMRNDMPNRDIEYDKLFILNTYNAGTPFNFSTSGVMNELNNQYTNMEKQRAKEAGNLEDSEMTAKQAKTKFIYETQQKGFSGKEVSYIPLLAIDASPKTWLTDYGVFGKREYLERVWDSIEWKIVESRLPQRTKIQAFNTL</sequence>
<name>RT01_YEAST</name>
<reference key="1">
    <citation type="journal article" date="1987" name="J. Biol. Chem.">
        <title>Assembly of the mitochondrial membrane system. MRP1 and MRP2, two yeast nuclear genes coding for mitochondrial ribosomal proteins.</title>
        <authorList>
            <person name="Myers A.M."/>
            <person name="Crivellone M.D."/>
            <person name="Tzagoloff A."/>
        </authorList>
    </citation>
    <scope>NUCLEOTIDE SEQUENCE [GENOMIC DNA]</scope>
</reference>
<reference key="2">
    <citation type="journal article" date="1997" name="Nature">
        <title>The nucleotide sequence of Saccharomyces cerevisiae chromosome IV.</title>
        <authorList>
            <person name="Jacq C."/>
            <person name="Alt-Moerbe J."/>
            <person name="Andre B."/>
            <person name="Arnold W."/>
            <person name="Bahr A."/>
            <person name="Ballesta J.P.G."/>
            <person name="Bargues M."/>
            <person name="Baron L."/>
            <person name="Becker A."/>
            <person name="Biteau N."/>
            <person name="Bloecker H."/>
            <person name="Blugeon C."/>
            <person name="Boskovic J."/>
            <person name="Brandt P."/>
            <person name="Brueckner M."/>
            <person name="Buitrago M.J."/>
            <person name="Coster F."/>
            <person name="Delaveau T."/>
            <person name="del Rey F."/>
            <person name="Dujon B."/>
            <person name="Eide L.G."/>
            <person name="Garcia-Cantalejo J.M."/>
            <person name="Goffeau A."/>
            <person name="Gomez-Peris A."/>
            <person name="Granotier C."/>
            <person name="Hanemann V."/>
            <person name="Hankeln T."/>
            <person name="Hoheisel J.D."/>
            <person name="Jaeger W."/>
            <person name="Jimenez A."/>
            <person name="Jonniaux J.-L."/>
            <person name="Kraemer C."/>
            <person name="Kuester H."/>
            <person name="Laamanen P."/>
            <person name="Legros Y."/>
            <person name="Louis E.J."/>
            <person name="Moeller-Rieker S."/>
            <person name="Monnet A."/>
            <person name="Moro M."/>
            <person name="Mueller-Auer S."/>
            <person name="Nussbaumer B."/>
            <person name="Paricio N."/>
            <person name="Paulin L."/>
            <person name="Perea J."/>
            <person name="Perez-Alonso M."/>
            <person name="Perez-Ortin J.E."/>
            <person name="Pohl T.M."/>
            <person name="Prydz H."/>
            <person name="Purnelle B."/>
            <person name="Rasmussen S.W."/>
            <person name="Remacha M.A."/>
            <person name="Revuelta J.L."/>
            <person name="Rieger M."/>
            <person name="Salom D."/>
            <person name="Saluz H.P."/>
            <person name="Saiz J.E."/>
            <person name="Saren A.-M."/>
            <person name="Schaefer M."/>
            <person name="Scharfe M."/>
            <person name="Schmidt E.R."/>
            <person name="Schneider C."/>
            <person name="Scholler P."/>
            <person name="Schwarz S."/>
            <person name="Soler-Mira A."/>
            <person name="Urrestarazu L.A."/>
            <person name="Verhasselt P."/>
            <person name="Vissers S."/>
            <person name="Voet M."/>
            <person name="Volckaert G."/>
            <person name="Wagner G."/>
            <person name="Wambutt R."/>
            <person name="Wedler E."/>
            <person name="Wedler H."/>
            <person name="Woelfl S."/>
            <person name="Harris D.E."/>
            <person name="Bowman S."/>
            <person name="Brown D."/>
            <person name="Churcher C.M."/>
            <person name="Connor R."/>
            <person name="Dedman K."/>
            <person name="Gentles S."/>
            <person name="Hamlin N."/>
            <person name="Hunt S."/>
            <person name="Jones L."/>
            <person name="McDonald S."/>
            <person name="Murphy L.D."/>
            <person name="Niblett D."/>
            <person name="Odell C."/>
            <person name="Oliver K."/>
            <person name="Rajandream M.A."/>
            <person name="Richards C."/>
            <person name="Shore L."/>
            <person name="Walsh S.V."/>
            <person name="Barrell B.G."/>
            <person name="Dietrich F.S."/>
            <person name="Mulligan J.T."/>
            <person name="Allen E."/>
            <person name="Araujo R."/>
            <person name="Aviles E."/>
            <person name="Berno A."/>
            <person name="Carpenter J."/>
            <person name="Chen E."/>
            <person name="Cherry J.M."/>
            <person name="Chung E."/>
            <person name="Duncan M."/>
            <person name="Hunicke-Smith S."/>
            <person name="Hyman R.W."/>
            <person name="Komp C."/>
            <person name="Lashkari D."/>
            <person name="Lew H."/>
            <person name="Lin D."/>
            <person name="Mosedale D."/>
            <person name="Nakahara K."/>
            <person name="Namath A."/>
            <person name="Oefner P."/>
            <person name="Oh C."/>
            <person name="Petel F.X."/>
            <person name="Roberts D."/>
            <person name="Schramm S."/>
            <person name="Schroeder M."/>
            <person name="Shogren T."/>
            <person name="Shroff N."/>
            <person name="Winant A."/>
            <person name="Yelton M.A."/>
            <person name="Botstein D."/>
            <person name="Davis R.W."/>
            <person name="Johnston M."/>
            <person name="Andrews S."/>
            <person name="Brinkman R."/>
            <person name="Cooper J."/>
            <person name="Ding H."/>
            <person name="Du Z."/>
            <person name="Favello A."/>
            <person name="Fulton L."/>
            <person name="Gattung S."/>
            <person name="Greco T."/>
            <person name="Hallsworth K."/>
            <person name="Hawkins J."/>
            <person name="Hillier L.W."/>
            <person name="Jier M."/>
            <person name="Johnson D."/>
            <person name="Johnston L."/>
            <person name="Kirsten J."/>
            <person name="Kucaba T."/>
            <person name="Langston Y."/>
            <person name="Latreille P."/>
            <person name="Le T."/>
            <person name="Mardis E."/>
            <person name="Menezes S."/>
            <person name="Miller N."/>
            <person name="Nhan M."/>
            <person name="Pauley A."/>
            <person name="Peluso D."/>
            <person name="Rifkin L."/>
            <person name="Riles L."/>
            <person name="Taich A."/>
            <person name="Trevaskis E."/>
            <person name="Vignati D."/>
            <person name="Wilcox L."/>
            <person name="Wohldman P."/>
            <person name="Vaudin M."/>
            <person name="Wilson R."/>
            <person name="Waterston R."/>
            <person name="Albermann K."/>
            <person name="Hani J."/>
            <person name="Heumann K."/>
            <person name="Kleine K."/>
            <person name="Mewes H.-W."/>
            <person name="Zollner A."/>
            <person name="Zaccaria P."/>
        </authorList>
    </citation>
    <scope>NUCLEOTIDE SEQUENCE [LARGE SCALE GENOMIC DNA]</scope>
    <source>
        <strain>ATCC 204508 / S288c</strain>
    </source>
</reference>
<reference key="3">
    <citation type="journal article" date="2014" name="G3 (Bethesda)">
        <title>The reference genome sequence of Saccharomyces cerevisiae: Then and now.</title>
        <authorList>
            <person name="Engel S.R."/>
            <person name="Dietrich F.S."/>
            <person name="Fisk D.G."/>
            <person name="Binkley G."/>
            <person name="Balakrishnan R."/>
            <person name="Costanzo M.C."/>
            <person name="Dwight S.S."/>
            <person name="Hitz B.C."/>
            <person name="Karra K."/>
            <person name="Nash R.S."/>
            <person name="Weng S."/>
            <person name="Wong E.D."/>
            <person name="Lloyd P."/>
            <person name="Skrzypek M.S."/>
            <person name="Miyasato S.R."/>
            <person name="Simison M."/>
            <person name="Cherry J.M."/>
        </authorList>
    </citation>
    <scope>GENOME REANNOTATION</scope>
    <source>
        <strain>ATCC 204508 / S288c</strain>
    </source>
</reference>
<reference key="4">
    <citation type="journal article" date="2007" name="Genome Res.">
        <title>Approaching a complete repository of sequence-verified protein-encoding clones for Saccharomyces cerevisiae.</title>
        <authorList>
            <person name="Hu Y."/>
            <person name="Rolfs A."/>
            <person name="Bhullar B."/>
            <person name="Murthy T.V.S."/>
            <person name="Zhu C."/>
            <person name="Berger M.F."/>
            <person name="Camargo A.A."/>
            <person name="Kelley F."/>
            <person name="McCarron S."/>
            <person name="Jepson D."/>
            <person name="Richardson A."/>
            <person name="Raphael J."/>
            <person name="Moreira D."/>
            <person name="Taycher E."/>
            <person name="Zuo D."/>
            <person name="Mohr S."/>
            <person name="Kane M.F."/>
            <person name="Williamson J."/>
            <person name="Simpson A.J.G."/>
            <person name="Bulyk M.L."/>
            <person name="Harlow E."/>
            <person name="Marsischky G."/>
            <person name="Kolodner R.D."/>
            <person name="LaBaer J."/>
        </authorList>
    </citation>
    <scope>NUCLEOTIDE SEQUENCE [GENOMIC DNA]</scope>
    <source>
        <strain>ATCC 204508 / S288c</strain>
    </source>
</reference>
<reference key="5">
    <citation type="journal article" date="2003" name="J. Biol. Chem.">
        <title>The yeast mitochondrial degradosome. Its composition, interplay between RNA helicase and RNase activities and the role in mitochondrial RNA metabolism.</title>
        <authorList>
            <person name="Dziembowski A."/>
            <person name="Piwowarski J."/>
            <person name="Hoser R."/>
            <person name="Minczuk M."/>
            <person name="Dmochowska A."/>
            <person name="Siep M."/>
            <person name="van der Spek H."/>
            <person name="Grivell L.A."/>
            <person name="Stepien P.P."/>
        </authorList>
    </citation>
    <scope>PROTEIN SEQUENCE OF 30-39 AND 264-278</scope>
</reference>
<reference key="6">
    <citation type="journal article" date="1990" name="J. Biol. Chem.">
        <title>Discoordinate expression of the yeast mitochondrial ribosomal protein MRP1.</title>
        <authorList>
            <person name="Dang H."/>
            <person name="Franklin G."/>
            <person name="Darlak K."/>
            <person name="Spatola A.F."/>
            <person name="Ellis S.R."/>
        </authorList>
    </citation>
    <scope>SUBUNIT</scope>
    <scope>SUBCELLULAR LOCATION</scope>
</reference>
<reference key="7">
    <citation type="journal article" date="2001" name="J. Biol. Chem.">
        <title>Identification of 12 new yeast mitochondrial ribosomal proteins including 6 that have no prokaryotic homologues.</title>
        <authorList>
            <person name="Saveanu C."/>
            <person name="Fromont-Racine M."/>
            <person name="Harington A."/>
            <person name="Ricard F."/>
            <person name="Namane A."/>
            <person name="Jacquier A."/>
        </authorList>
    </citation>
    <scope>IDENTIFICATION IN THE MITOCHONDRIAL RIBOSOMAL SMALL COMPLEX</scope>
    <scope>IDENTIFICATION BY MASS SPECTROMETRY</scope>
</reference>
<reference key="8">
    <citation type="journal article" date="2002" name="Eur. J. Biochem.">
        <title>Tag-mediated isolation of yeast mitochondrial ribosome and mass spectrometric identification of its new components.</title>
        <authorList>
            <person name="Gan X."/>
            <person name="Kitakawa M."/>
            <person name="Yoshino K."/>
            <person name="Oshiro N."/>
            <person name="Yonezawa K."/>
            <person name="Isono K."/>
        </authorList>
    </citation>
    <scope>IDENTIFICATION IN THE MITOCHONDRIAL RIBOSOMAL SMALL COMPLEX</scope>
    <scope>IDENTIFICATION BY MASS SPECTROMETRY</scope>
</reference>
<reference key="9">
    <citation type="journal article" date="2003" name="Nature">
        <title>Global analysis of protein localization in budding yeast.</title>
        <authorList>
            <person name="Huh W.-K."/>
            <person name="Falvo J.V."/>
            <person name="Gerke L.C."/>
            <person name="Carroll A.S."/>
            <person name="Howson R.W."/>
            <person name="Weissman J.S."/>
            <person name="O'Shea E.K."/>
        </authorList>
    </citation>
    <scope>SUBCELLULAR LOCATION [LARGE SCALE ANALYSIS]</scope>
</reference>
<reference key="10">
    <citation type="journal article" date="2003" name="Nature">
        <title>Global analysis of protein expression in yeast.</title>
        <authorList>
            <person name="Ghaemmaghami S."/>
            <person name="Huh W.-K."/>
            <person name="Bower K."/>
            <person name="Howson R.W."/>
            <person name="Belle A."/>
            <person name="Dephoure N."/>
            <person name="O'Shea E.K."/>
            <person name="Weissman J.S."/>
        </authorList>
    </citation>
    <scope>LEVEL OF PROTEIN EXPRESSION [LARGE SCALE ANALYSIS]</scope>
</reference>
<reference key="11">
    <citation type="journal article" date="2003" name="Proc. Natl. Acad. Sci. U.S.A.">
        <title>The proteome of Saccharomyces cerevisiae mitochondria.</title>
        <authorList>
            <person name="Sickmann A."/>
            <person name="Reinders J."/>
            <person name="Wagner Y."/>
            <person name="Joppich C."/>
            <person name="Zahedi R.P."/>
            <person name="Meyer H.E."/>
            <person name="Schoenfisch B."/>
            <person name="Perschil I."/>
            <person name="Chacinska A."/>
            <person name="Guiard B."/>
            <person name="Rehling P."/>
            <person name="Pfanner N."/>
            <person name="Meisinger C."/>
        </authorList>
    </citation>
    <scope>SUBCELLULAR LOCATION [LARGE SCALE ANALYSIS]</scope>
    <source>
        <strain>ATCC 76625 / YPH499</strain>
    </source>
</reference>
<reference key="12">
    <citation type="journal article" date="2015" name="Nat. Commun.">
        <title>Organization of the mitochondrial translation machinery studied in situ by cryoelectron tomography.</title>
        <authorList>
            <person name="Pfeffer S."/>
            <person name="Woellhaf M.W."/>
            <person name="Herrmann J.M."/>
            <person name="Forster F."/>
        </authorList>
    </citation>
    <scope>SUBCELLULAR LOCATION</scope>
</reference>
<reference key="13">
    <citation type="journal article" date="2017" name="Science">
        <title>The structure of the yeast mitochondrial ribosome.</title>
        <authorList>
            <person name="Desai N."/>
            <person name="Brown A."/>
            <person name="Amunts A."/>
            <person name="Ramakrishnan V."/>
        </authorList>
    </citation>
    <scope>STRUCTURE BY ELECTRON MICROSCOPY (3.25 ANGSTROMS)</scope>
    <scope>SUBUNIT</scope>
</reference>
<gene>
    <name type="primary">MRP1</name>
    <name type="ordered locus">YDR347W</name>
    <name type="ORF">D9651.1</name>
</gene>
<keyword id="KW-0002">3D-structure</keyword>
<keyword id="KW-0903">Direct protein sequencing</keyword>
<keyword id="KW-0496">Mitochondrion</keyword>
<keyword id="KW-1185">Reference proteome</keyword>
<keyword id="KW-0687">Ribonucleoprotein</keyword>
<keyword id="KW-0689">Ribosomal protein</keyword>
<keyword id="KW-0809">Transit peptide</keyword>